<keyword id="KW-0067">ATP-binding</keyword>
<keyword id="KW-0418">Kinase</keyword>
<keyword id="KW-0547">Nucleotide-binding</keyword>
<keyword id="KW-1185">Reference proteome</keyword>
<keyword id="KW-0723">Serine/threonine-protein kinase</keyword>
<keyword id="KW-0808">Transferase</keyword>
<gene>
    <name evidence="5" type="primary">Stk-ps2</name>
    <name evidence="5" type="synonym">Gm4776</name>
</gene>
<feature type="chain" id="PRO_0000307874" description="Putative sperm motility kinase W">
    <location>
        <begin position="1"/>
        <end position="499"/>
    </location>
</feature>
<feature type="domain" description="Protein kinase" evidence="2">
    <location>
        <begin position="14"/>
        <end position="262"/>
    </location>
</feature>
<feature type="domain" description="UBA" evidence="3">
    <location>
        <begin position="274"/>
        <end position="314"/>
    </location>
</feature>
<feature type="active site" description="Proton acceptor" evidence="2">
    <location>
        <position position="133"/>
    </location>
</feature>
<feature type="binding site" evidence="2">
    <location>
        <begin position="20"/>
        <end position="28"/>
    </location>
    <ligand>
        <name>ATP</name>
        <dbReference type="ChEBI" id="CHEBI:30616"/>
    </ligand>
</feature>
<feature type="binding site" evidence="2">
    <location>
        <position position="43"/>
    </location>
    <ligand>
        <name>ATP</name>
        <dbReference type="ChEBI" id="CHEBI:30616"/>
    </ligand>
</feature>
<feature type="sequence conflict" description="In Ref. 1; BAC26584." evidence="4" ref="1">
    <original>K</original>
    <variation>R</variation>
    <location>
        <position position="486"/>
    </location>
</feature>
<protein>
    <recommendedName>
        <fullName evidence="5">Putative sperm motility kinase W</fullName>
        <ecNumber>2.7.11.1</ecNumber>
    </recommendedName>
</protein>
<accession>Q8C0V7</accession>
<accession>E9PV11</accession>
<comment type="function">
    <text evidence="1">May play a role in sperm motility, especially in the regulation of flagellar function.</text>
</comment>
<comment type="catalytic activity">
    <reaction>
        <text>L-seryl-[protein] + ATP = O-phospho-L-seryl-[protein] + ADP + H(+)</text>
        <dbReference type="Rhea" id="RHEA:17989"/>
        <dbReference type="Rhea" id="RHEA-COMP:9863"/>
        <dbReference type="Rhea" id="RHEA-COMP:11604"/>
        <dbReference type="ChEBI" id="CHEBI:15378"/>
        <dbReference type="ChEBI" id="CHEBI:29999"/>
        <dbReference type="ChEBI" id="CHEBI:30616"/>
        <dbReference type="ChEBI" id="CHEBI:83421"/>
        <dbReference type="ChEBI" id="CHEBI:456216"/>
        <dbReference type="EC" id="2.7.11.1"/>
    </reaction>
</comment>
<comment type="catalytic activity">
    <reaction>
        <text>L-threonyl-[protein] + ATP = O-phospho-L-threonyl-[protein] + ADP + H(+)</text>
        <dbReference type="Rhea" id="RHEA:46608"/>
        <dbReference type="Rhea" id="RHEA-COMP:11060"/>
        <dbReference type="Rhea" id="RHEA-COMP:11605"/>
        <dbReference type="ChEBI" id="CHEBI:15378"/>
        <dbReference type="ChEBI" id="CHEBI:30013"/>
        <dbReference type="ChEBI" id="CHEBI:30616"/>
        <dbReference type="ChEBI" id="CHEBI:61977"/>
        <dbReference type="ChEBI" id="CHEBI:456216"/>
        <dbReference type="EC" id="2.7.11.1"/>
    </reaction>
</comment>
<comment type="similarity">
    <text evidence="4">Belongs to the protein kinase superfamily. CAMK Ser/Thr protein kinase family. Smok subfamily.</text>
</comment>
<comment type="caution">
    <text evidence="4">Could be the product of a pseudogene.</text>
</comment>
<name>SMKW_MOUSE</name>
<evidence type="ECO:0000250" key="1"/>
<evidence type="ECO:0000255" key="2">
    <source>
        <dbReference type="PROSITE-ProRule" id="PRU00159"/>
    </source>
</evidence>
<evidence type="ECO:0000255" key="3">
    <source>
        <dbReference type="PROSITE-ProRule" id="PRU00212"/>
    </source>
</evidence>
<evidence type="ECO:0000305" key="4"/>
<evidence type="ECO:0000312" key="5">
    <source>
        <dbReference type="MGI" id="MGI:3643324"/>
    </source>
</evidence>
<reference key="1">
    <citation type="journal article" date="2005" name="Science">
        <title>The transcriptional landscape of the mammalian genome.</title>
        <authorList>
            <person name="Carninci P."/>
            <person name="Kasukawa T."/>
            <person name="Katayama S."/>
            <person name="Gough J."/>
            <person name="Frith M.C."/>
            <person name="Maeda N."/>
            <person name="Oyama R."/>
            <person name="Ravasi T."/>
            <person name="Lenhard B."/>
            <person name="Wells C."/>
            <person name="Kodzius R."/>
            <person name="Shimokawa K."/>
            <person name="Bajic V.B."/>
            <person name="Brenner S.E."/>
            <person name="Batalov S."/>
            <person name="Forrest A.R."/>
            <person name="Zavolan M."/>
            <person name="Davis M.J."/>
            <person name="Wilming L.G."/>
            <person name="Aidinis V."/>
            <person name="Allen J.E."/>
            <person name="Ambesi-Impiombato A."/>
            <person name="Apweiler R."/>
            <person name="Aturaliya R.N."/>
            <person name="Bailey T.L."/>
            <person name="Bansal M."/>
            <person name="Baxter L."/>
            <person name="Beisel K.W."/>
            <person name="Bersano T."/>
            <person name="Bono H."/>
            <person name="Chalk A.M."/>
            <person name="Chiu K.P."/>
            <person name="Choudhary V."/>
            <person name="Christoffels A."/>
            <person name="Clutterbuck D.R."/>
            <person name="Crowe M.L."/>
            <person name="Dalla E."/>
            <person name="Dalrymple B.P."/>
            <person name="de Bono B."/>
            <person name="Della Gatta G."/>
            <person name="di Bernardo D."/>
            <person name="Down T."/>
            <person name="Engstrom P."/>
            <person name="Fagiolini M."/>
            <person name="Faulkner G."/>
            <person name="Fletcher C.F."/>
            <person name="Fukushima T."/>
            <person name="Furuno M."/>
            <person name="Futaki S."/>
            <person name="Gariboldi M."/>
            <person name="Georgii-Hemming P."/>
            <person name="Gingeras T.R."/>
            <person name="Gojobori T."/>
            <person name="Green R.E."/>
            <person name="Gustincich S."/>
            <person name="Harbers M."/>
            <person name="Hayashi Y."/>
            <person name="Hensch T.K."/>
            <person name="Hirokawa N."/>
            <person name="Hill D."/>
            <person name="Huminiecki L."/>
            <person name="Iacono M."/>
            <person name="Ikeo K."/>
            <person name="Iwama A."/>
            <person name="Ishikawa T."/>
            <person name="Jakt M."/>
            <person name="Kanapin A."/>
            <person name="Katoh M."/>
            <person name="Kawasawa Y."/>
            <person name="Kelso J."/>
            <person name="Kitamura H."/>
            <person name="Kitano H."/>
            <person name="Kollias G."/>
            <person name="Krishnan S.P."/>
            <person name="Kruger A."/>
            <person name="Kummerfeld S.K."/>
            <person name="Kurochkin I.V."/>
            <person name="Lareau L.F."/>
            <person name="Lazarevic D."/>
            <person name="Lipovich L."/>
            <person name="Liu J."/>
            <person name="Liuni S."/>
            <person name="McWilliam S."/>
            <person name="Madan Babu M."/>
            <person name="Madera M."/>
            <person name="Marchionni L."/>
            <person name="Matsuda H."/>
            <person name="Matsuzawa S."/>
            <person name="Miki H."/>
            <person name="Mignone F."/>
            <person name="Miyake S."/>
            <person name="Morris K."/>
            <person name="Mottagui-Tabar S."/>
            <person name="Mulder N."/>
            <person name="Nakano N."/>
            <person name="Nakauchi H."/>
            <person name="Ng P."/>
            <person name="Nilsson R."/>
            <person name="Nishiguchi S."/>
            <person name="Nishikawa S."/>
            <person name="Nori F."/>
            <person name="Ohara O."/>
            <person name="Okazaki Y."/>
            <person name="Orlando V."/>
            <person name="Pang K.C."/>
            <person name="Pavan W.J."/>
            <person name="Pavesi G."/>
            <person name="Pesole G."/>
            <person name="Petrovsky N."/>
            <person name="Piazza S."/>
            <person name="Reed J."/>
            <person name="Reid J.F."/>
            <person name="Ring B.Z."/>
            <person name="Ringwald M."/>
            <person name="Rost B."/>
            <person name="Ruan Y."/>
            <person name="Salzberg S.L."/>
            <person name="Sandelin A."/>
            <person name="Schneider C."/>
            <person name="Schoenbach C."/>
            <person name="Sekiguchi K."/>
            <person name="Semple C.A."/>
            <person name="Seno S."/>
            <person name="Sessa L."/>
            <person name="Sheng Y."/>
            <person name="Shibata Y."/>
            <person name="Shimada H."/>
            <person name="Shimada K."/>
            <person name="Silva D."/>
            <person name="Sinclair B."/>
            <person name="Sperling S."/>
            <person name="Stupka E."/>
            <person name="Sugiura K."/>
            <person name="Sultana R."/>
            <person name="Takenaka Y."/>
            <person name="Taki K."/>
            <person name="Tammoja K."/>
            <person name="Tan S.L."/>
            <person name="Tang S."/>
            <person name="Taylor M.S."/>
            <person name="Tegner J."/>
            <person name="Teichmann S.A."/>
            <person name="Ueda H.R."/>
            <person name="van Nimwegen E."/>
            <person name="Verardo R."/>
            <person name="Wei C.L."/>
            <person name="Yagi K."/>
            <person name="Yamanishi H."/>
            <person name="Zabarovsky E."/>
            <person name="Zhu S."/>
            <person name="Zimmer A."/>
            <person name="Hide W."/>
            <person name="Bult C."/>
            <person name="Grimmond S.M."/>
            <person name="Teasdale R.D."/>
            <person name="Liu E.T."/>
            <person name="Brusic V."/>
            <person name="Quackenbush J."/>
            <person name="Wahlestedt C."/>
            <person name="Mattick J.S."/>
            <person name="Hume D.A."/>
            <person name="Kai C."/>
            <person name="Sasaki D."/>
            <person name="Tomaru Y."/>
            <person name="Fukuda S."/>
            <person name="Kanamori-Katayama M."/>
            <person name="Suzuki M."/>
            <person name="Aoki J."/>
            <person name="Arakawa T."/>
            <person name="Iida J."/>
            <person name="Imamura K."/>
            <person name="Itoh M."/>
            <person name="Kato T."/>
            <person name="Kawaji H."/>
            <person name="Kawagashira N."/>
            <person name="Kawashima T."/>
            <person name="Kojima M."/>
            <person name="Kondo S."/>
            <person name="Konno H."/>
            <person name="Nakano K."/>
            <person name="Ninomiya N."/>
            <person name="Nishio T."/>
            <person name="Okada M."/>
            <person name="Plessy C."/>
            <person name="Shibata K."/>
            <person name="Shiraki T."/>
            <person name="Suzuki S."/>
            <person name="Tagami M."/>
            <person name="Waki K."/>
            <person name="Watahiki A."/>
            <person name="Okamura-Oho Y."/>
            <person name="Suzuki H."/>
            <person name="Kawai J."/>
            <person name="Hayashizaki Y."/>
        </authorList>
    </citation>
    <scope>NUCLEOTIDE SEQUENCE [LARGE SCALE MRNA]</scope>
    <source>
        <strain>C57BL/6J</strain>
        <tissue>Testis</tissue>
    </source>
</reference>
<reference key="2">
    <citation type="journal article" date="2009" name="PLoS Biol.">
        <title>Lineage-specific biology revealed by a finished genome assembly of the mouse.</title>
        <authorList>
            <person name="Church D.M."/>
            <person name="Goodstadt L."/>
            <person name="Hillier L.W."/>
            <person name="Zody M.C."/>
            <person name="Goldstein S."/>
            <person name="She X."/>
            <person name="Bult C.J."/>
            <person name="Agarwala R."/>
            <person name="Cherry J.L."/>
            <person name="DiCuccio M."/>
            <person name="Hlavina W."/>
            <person name="Kapustin Y."/>
            <person name="Meric P."/>
            <person name="Maglott D."/>
            <person name="Birtle Z."/>
            <person name="Marques A.C."/>
            <person name="Graves T."/>
            <person name="Zhou S."/>
            <person name="Teague B."/>
            <person name="Potamousis K."/>
            <person name="Churas C."/>
            <person name="Place M."/>
            <person name="Herschleb J."/>
            <person name="Runnheim R."/>
            <person name="Forrest D."/>
            <person name="Amos-Landgraf J."/>
            <person name="Schwartz D.C."/>
            <person name="Cheng Z."/>
            <person name="Lindblad-Toh K."/>
            <person name="Eichler E.E."/>
            <person name="Ponting C.P."/>
        </authorList>
    </citation>
    <scope>NUCLEOTIDE SEQUENCE [LARGE SCALE GENOMIC DNA]</scope>
    <source>
        <strain>C57BL/6J</strain>
    </source>
</reference>
<organism>
    <name type="scientific">Mus musculus</name>
    <name type="common">Mouse</name>
    <dbReference type="NCBI Taxonomy" id="10090"/>
    <lineage>
        <taxon>Eukaryota</taxon>
        <taxon>Metazoa</taxon>
        <taxon>Chordata</taxon>
        <taxon>Craniata</taxon>
        <taxon>Vertebrata</taxon>
        <taxon>Euteleostomi</taxon>
        <taxon>Mammalia</taxon>
        <taxon>Eutheria</taxon>
        <taxon>Euarchontoglires</taxon>
        <taxon>Glires</taxon>
        <taxon>Rodentia</taxon>
        <taxon>Myomorpha</taxon>
        <taxon>Muroidea</taxon>
        <taxon>Muridae</taxon>
        <taxon>Murinae</taxon>
        <taxon>Mus</taxon>
        <taxon>Mus</taxon>
    </lineage>
</organism>
<proteinExistence type="uncertain"/>
<sequence>MASNSKKKDVGSQYKVLFTLGHGSFGTVKLACHLKTKALVAIKMVELSKKNIRGIRAEIATLEKLQHPNIICLFQVLVTSKHINIVTEYIPGGNLFDIIKEDGPMHEEEARRIFGQVVSAVKYCHNQDIVHQDIKAQNILRDEEGNVKIIDFGLAIRCRSGTLLKRQCGTKSCFAPELVLQEPYDGKKADVWSLGVLLYFITTGYYPFRGSTMKEMEEKIATGTYDIPTHVSGQLENLIHQILTVPPEMRPSIEDIERHPWVKKTEVNNPTVTDPDYNIIEMLCGMGFDANEILESLQRKKYNESMGAYLILKAQVDKGLEHTSIISAKPVDQCPTPPPSPPAHPSISSLLLKRRASEPNFSLLHIQPSGEHRPVSLALPGHKVARSASMPPIALHYPEKKSNSSSFALHSGAVAAPSVGNSILEDELPVPPDQEYDMGACFGSTYTKQCDMETPSPPQKISRFKRMSKRIRACLAQLCCIPRAPKTKKKHTSSNKIAP</sequence>
<dbReference type="EC" id="2.7.11.1"/>
<dbReference type="EMBL" id="AK029722">
    <property type="protein sequence ID" value="BAC26584.1"/>
    <property type="molecule type" value="mRNA"/>
</dbReference>
<dbReference type="EMBL" id="AC123557">
    <property type="status" value="NOT_ANNOTATED_CDS"/>
    <property type="molecule type" value="Genomic_DNA"/>
</dbReference>
<dbReference type="SMR" id="Q8C0V7"/>
<dbReference type="FunCoup" id="Q8C0V7">
    <property type="interactions" value="96"/>
</dbReference>
<dbReference type="GlyGen" id="Q8C0V7">
    <property type="glycosylation" value="1 site"/>
</dbReference>
<dbReference type="AGR" id="MGI:3643324"/>
<dbReference type="MGI" id="MGI:3643324">
    <property type="gene designation" value="Stk-ps2"/>
</dbReference>
<dbReference type="InParanoid" id="Q8C0V7"/>
<dbReference type="OrthoDB" id="9627261at2759"/>
<dbReference type="TreeFam" id="TF338820"/>
<dbReference type="PRO" id="PR:Q8C0V7"/>
<dbReference type="Proteomes" id="UP000000589">
    <property type="component" value="Unplaced"/>
</dbReference>
<dbReference type="RNAct" id="Q8C0V7">
    <property type="molecule type" value="protein"/>
</dbReference>
<dbReference type="GO" id="GO:0005524">
    <property type="term" value="F:ATP binding"/>
    <property type="evidence" value="ECO:0007669"/>
    <property type="project" value="UniProtKB-KW"/>
</dbReference>
<dbReference type="GO" id="GO:0106310">
    <property type="term" value="F:protein serine kinase activity"/>
    <property type="evidence" value="ECO:0007669"/>
    <property type="project" value="RHEA"/>
</dbReference>
<dbReference type="GO" id="GO:0004674">
    <property type="term" value="F:protein serine/threonine kinase activity"/>
    <property type="evidence" value="ECO:0007669"/>
    <property type="project" value="UniProtKB-KW"/>
</dbReference>
<dbReference type="CDD" id="cd14003">
    <property type="entry name" value="STKc_AMPK-like"/>
    <property type="match status" value="1"/>
</dbReference>
<dbReference type="CDD" id="cd14337">
    <property type="entry name" value="UBA_MARK_Par1"/>
    <property type="match status" value="1"/>
</dbReference>
<dbReference type="FunFam" id="3.30.200.20:FF:000042">
    <property type="entry name" value="Aurora kinase A"/>
    <property type="match status" value="1"/>
</dbReference>
<dbReference type="FunFam" id="1.10.510.10:FF:000002">
    <property type="entry name" value="Non-specific serine/threonine protein kinase"/>
    <property type="match status" value="1"/>
</dbReference>
<dbReference type="FunFam" id="1.10.8.10:FF:000005">
    <property type="entry name" value="Non-specific serine/threonine protein kinase"/>
    <property type="match status" value="1"/>
</dbReference>
<dbReference type="Gene3D" id="1.10.8.10">
    <property type="entry name" value="DNA helicase RuvA subunit, C-terminal domain"/>
    <property type="match status" value="1"/>
</dbReference>
<dbReference type="Gene3D" id="3.30.200.20">
    <property type="entry name" value="Phosphorylase Kinase, domain 1"/>
    <property type="match status" value="1"/>
</dbReference>
<dbReference type="Gene3D" id="1.10.510.10">
    <property type="entry name" value="Transferase(Phosphotransferase) domain 1"/>
    <property type="match status" value="1"/>
</dbReference>
<dbReference type="InterPro" id="IPR011009">
    <property type="entry name" value="Kinase-like_dom_sf"/>
</dbReference>
<dbReference type="InterPro" id="IPR000719">
    <property type="entry name" value="Prot_kinase_dom"/>
</dbReference>
<dbReference type="InterPro" id="IPR017441">
    <property type="entry name" value="Protein_kinase_ATP_BS"/>
</dbReference>
<dbReference type="InterPro" id="IPR015940">
    <property type="entry name" value="UBA"/>
</dbReference>
<dbReference type="PANTHER" id="PTHR24346">
    <property type="entry name" value="MAP/MICROTUBULE AFFINITY-REGULATING KINASE"/>
    <property type="match status" value="1"/>
</dbReference>
<dbReference type="PANTHER" id="PTHR24346:SF56">
    <property type="entry name" value="SERINE_THREONINE-PROTEIN KINASE MARK2"/>
    <property type="match status" value="1"/>
</dbReference>
<dbReference type="Pfam" id="PF00069">
    <property type="entry name" value="Pkinase"/>
    <property type="match status" value="1"/>
</dbReference>
<dbReference type="SMART" id="SM00220">
    <property type="entry name" value="S_TKc"/>
    <property type="match status" value="1"/>
</dbReference>
<dbReference type="SMART" id="SM00165">
    <property type="entry name" value="UBA"/>
    <property type="match status" value="1"/>
</dbReference>
<dbReference type="SUPFAM" id="SSF56112">
    <property type="entry name" value="Protein kinase-like (PK-like)"/>
    <property type="match status" value="1"/>
</dbReference>
<dbReference type="PROSITE" id="PS00107">
    <property type="entry name" value="PROTEIN_KINASE_ATP"/>
    <property type="match status" value="1"/>
</dbReference>
<dbReference type="PROSITE" id="PS50011">
    <property type="entry name" value="PROTEIN_KINASE_DOM"/>
    <property type="match status" value="1"/>
</dbReference>
<dbReference type="PROSITE" id="PS50030">
    <property type="entry name" value="UBA"/>
    <property type="match status" value="1"/>
</dbReference>